<gene>
    <name type="ordered locus">MJ1649</name>
</gene>
<accession>Q59043</accession>
<organism>
    <name type="scientific">Methanocaldococcus jannaschii (strain ATCC 43067 / DSM 2661 / JAL-1 / JCM 10045 / NBRC 100440)</name>
    <name type="common">Methanococcus jannaschii</name>
    <dbReference type="NCBI Taxonomy" id="243232"/>
    <lineage>
        <taxon>Archaea</taxon>
        <taxon>Methanobacteriati</taxon>
        <taxon>Methanobacteriota</taxon>
        <taxon>Methanomada group</taxon>
        <taxon>Methanococci</taxon>
        <taxon>Methanococcales</taxon>
        <taxon>Methanocaldococcaceae</taxon>
        <taxon>Methanocaldococcus</taxon>
    </lineage>
</organism>
<sequence>MVMILIKLEIDRRAYNSIKNFSRLVYTKAIKNRGDLPKKEEIVTLTYNGKFVAKALYNPKSVILKILTTEDEEIDYDFFYKRIFNAKIYRENILNYKNTYRWIYAEGDELPTIIFDKYNELGAMQLMSKLIEKEYLKDIVDILFELSDLETIYVKRGKKGERIRDKIFGDKNKFETVIKEGDAKFKVNVRGHKTGFFLDQRENRLYLEKFIKEGDRVLDICCYTGGFSVHAAIRGAEVVGVDLSKKALKLAEENIELNNIPKDRYEFIEGNAFEVMKEMIEDKEKFDVVILDPPAFTQTEDDIKNALRAYASLNYLGIKLAKRIFVTCSCSHHVDKEMFKRTVISSAFRAKKELIMIDYKGQAPDHPISIGNKNLEYLKCIFFYVKN</sequence>
<keyword id="KW-0963">Cytoplasm</keyword>
<keyword id="KW-0489">Methyltransferase</keyword>
<keyword id="KW-1185">Reference proteome</keyword>
<keyword id="KW-0694">RNA-binding</keyword>
<keyword id="KW-0698">rRNA processing</keyword>
<keyword id="KW-0949">S-adenosyl-L-methionine</keyword>
<keyword id="KW-0808">Transferase</keyword>
<comment type="subcellular location">
    <subcellularLocation>
        <location evidence="2">Cytoplasm</location>
    </subcellularLocation>
</comment>
<comment type="similarity">
    <text evidence="2">Belongs to the methyltransferase superfamily. RlmI family.</text>
</comment>
<evidence type="ECO:0000255" key="1">
    <source>
        <dbReference type="PROSITE-ProRule" id="PRU00161"/>
    </source>
</evidence>
<evidence type="ECO:0000305" key="2"/>
<protein>
    <recommendedName>
        <fullName>Putative ribosomal RNA large subunit methyltransferase MJ1649</fullName>
        <ecNumber>2.1.1.-</ecNumber>
    </recommendedName>
</protein>
<proteinExistence type="inferred from homology"/>
<name>Y1649_METJA</name>
<reference key="1">
    <citation type="journal article" date="1996" name="Science">
        <title>Complete genome sequence of the methanogenic archaeon, Methanococcus jannaschii.</title>
        <authorList>
            <person name="Bult C.J."/>
            <person name="White O."/>
            <person name="Olsen G.J."/>
            <person name="Zhou L."/>
            <person name="Fleischmann R.D."/>
            <person name="Sutton G.G."/>
            <person name="Blake J.A."/>
            <person name="FitzGerald L.M."/>
            <person name="Clayton R.A."/>
            <person name="Gocayne J.D."/>
            <person name="Kerlavage A.R."/>
            <person name="Dougherty B.A."/>
            <person name="Tomb J.-F."/>
            <person name="Adams M.D."/>
            <person name="Reich C.I."/>
            <person name="Overbeek R."/>
            <person name="Kirkness E.F."/>
            <person name="Weinstock K.G."/>
            <person name="Merrick J.M."/>
            <person name="Glodek A."/>
            <person name="Scott J.L."/>
            <person name="Geoghagen N.S.M."/>
            <person name="Weidman J.F."/>
            <person name="Fuhrmann J.L."/>
            <person name="Nguyen D."/>
            <person name="Utterback T.R."/>
            <person name="Kelley J.M."/>
            <person name="Peterson J.D."/>
            <person name="Sadow P.W."/>
            <person name="Hanna M.C."/>
            <person name="Cotton M.D."/>
            <person name="Roberts K.M."/>
            <person name="Hurst M.A."/>
            <person name="Kaine B.P."/>
            <person name="Borodovsky M."/>
            <person name="Klenk H.-P."/>
            <person name="Fraser C.M."/>
            <person name="Smith H.O."/>
            <person name="Woese C.R."/>
            <person name="Venter J.C."/>
        </authorList>
    </citation>
    <scope>NUCLEOTIDE SEQUENCE [LARGE SCALE GENOMIC DNA]</scope>
    <source>
        <strain>ATCC 43067 / DSM 2661 / JAL-1 / JCM 10045 / NBRC 100440</strain>
    </source>
</reference>
<feature type="chain" id="PRO_0000213172" description="Putative ribosomal RNA large subunit methyltransferase MJ1649">
    <location>
        <begin position="1"/>
        <end position="387"/>
    </location>
</feature>
<feature type="domain" description="PUA" evidence="1">
    <location>
        <begin position="5"/>
        <end position="81"/>
    </location>
</feature>
<dbReference type="EC" id="2.1.1.-"/>
<dbReference type="EMBL" id="L77117">
    <property type="protein sequence ID" value="AAB99670.1"/>
    <property type="molecule type" value="Genomic_DNA"/>
</dbReference>
<dbReference type="PIR" id="G64505">
    <property type="entry name" value="G64505"/>
</dbReference>
<dbReference type="SMR" id="Q59043"/>
<dbReference type="FunCoup" id="Q59043">
    <property type="interactions" value="35"/>
</dbReference>
<dbReference type="STRING" id="243232.MJ_1649"/>
<dbReference type="PaxDb" id="243232-MJ_1649"/>
<dbReference type="EnsemblBacteria" id="AAB99670">
    <property type="protein sequence ID" value="AAB99670"/>
    <property type="gene ID" value="MJ_1649"/>
</dbReference>
<dbReference type="KEGG" id="mja:MJ_1649"/>
<dbReference type="eggNOG" id="arCOG00032">
    <property type="taxonomic scope" value="Archaea"/>
</dbReference>
<dbReference type="HOGENOM" id="CLU_014042_0_0_2"/>
<dbReference type="InParanoid" id="Q59043"/>
<dbReference type="PhylomeDB" id="Q59043"/>
<dbReference type="Proteomes" id="UP000000805">
    <property type="component" value="Chromosome"/>
</dbReference>
<dbReference type="GO" id="GO:0005737">
    <property type="term" value="C:cytoplasm"/>
    <property type="evidence" value="ECO:0007669"/>
    <property type="project" value="UniProtKB-SubCell"/>
</dbReference>
<dbReference type="GO" id="GO:0008168">
    <property type="term" value="F:methyltransferase activity"/>
    <property type="evidence" value="ECO:0007669"/>
    <property type="project" value="UniProtKB-KW"/>
</dbReference>
<dbReference type="GO" id="GO:0003723">
    <property type="term" value="F:RNA binding"/>
    <property type="evidence" value="ECO:0007669"/>
    <property type="project" value="UniProtKB-KW"/>
</dbReference>
<dbReference type="GO" id="GO:0032259">
    <property type="term" value="P:methylation"/>
    <property type="evidence" value="ECO:0007669"/>
    <property type="project" value="UniProtKB-KW"/>
</dbReference>
<dbReference type="GO" id="GO:0006364">
    <property type="term" value="P:rRNA processing"/>
    <property type="evidence" value="ECO:0007669"/>
    <property type="project" value="UniProtKB-KW"/>
</dbReference>
<dbReference type="CDD" id="cd02440">
    <property type="entry name" value="AdoMet_MTases"/>
    <property type="match status" value="1"/>
</dbReference>
<dbReference type="CDD" id="cd21153">
    <property type="entry name" value="PUA_RlmI"/>
    <property type="match status" value="1"/>
</dbReference>
<dbReference type="CDD" id="cd11572">
    <property type="entry name" value="RlmI_M_like"/>
    <property type="match status" value="1"/>
</dbReference>
<dbReference type="Gene3D" id="3.30.750.80">
    <property type="entry name" value="RNA methyltransferase domain (HRMD) like"/>
    <property type="match status" value="1"/>
</dbReference>
<dbReference type="Gene3D" id="3.40.50.150">
    <property type="entry name" value="Vaccinia Virus protein VP39"/>
    <property type="match status" value="1"/>
</dbReference>
<dbReference type="InterPro" id="IPR002478">
    <property type="entry name" value="PUA"/>
</dbReference>
<dbReference type="InterPro" id="IPR015947">
    <property type="entry name" value="PUA-like_sf"/>
</dbReference>
<dbReference type="InterPro" id="IPR041532">
    <property type="entry name" value="RlmI-like_PUA"/>
</dbReference>
<dbReference type="InterPro" id="IPR019614">
    <property type="entry name" value="SAM-dep_methyl-trfase"/>
</dbReference>
<dbReference type="InterPro" id="IPR029063">
    <property type="entry name" value="SAM-dependent_MTases_sf"/>
</dbReference>
<dbReference type="PANTHER" id="PTHR42873">
    <property type="entry name" value="RIBOSOMAL RNA LARGE SUBUNIT METHYLTRANSFERASE"/>
    <property type="match status" value="1"/>
</dbReference>
<dbReference type="PANTHER" id="PTHR42873:SF1">
    <property type="entry name" value="S-ADENOSYLMETHIONINE-DEPENDENT METHYLTRANSFERASE DOMAIN-CONTAINING PROTEIN"/>
    <property type="match status" value="1"/>
</dbReference>
<dbReference type="Pfam" id="PF10672">
    <property type="entry name" value="Methyltrans_SAM"/>
    <property type="match status" value="1"/>
</dbReference>
<dbReference type="Pfam" id="PF01472">
    <property type="entry name" value="PUA"/>
    <property type="match status" value="1"/>
</dbReference>
<dbReference type="SMART" id="SM00359">
    <property type="entry name" value="PUA"/>
    <property type="match status" value="1"/>
</dbReference>
<dbReference type="SUPFAM" id="SSF88697">
    <property type="entry name" value="PUA domain-like"/>
    <property type="match status" value="1"/>
</dbReference>
<dbReference type="SUPFAM" id="SSF53335">
    <property type="entry name" value="S-adenosyl-L-methionine-dependent methyltransferases"/>
    <property type="match status" value="1"/>
</dbReference>
<dbReference type="PROSITE" id="PS50890">
    <property type="entry name" value="PUA"/>
    <property type="match status" value="1"/>
</dbReference>